<keyword id="KW-0449">Lipoprotein</keyword>
<keyword id="KW-0472">Membrane</keyword>
<keyword id="KW-0564">Palmitate</keyword>
<keyword id="KW-0602">Photosynthesis</keyword>
<keyword id="KW-0604">Photosystem II</keyword>
<keyword id="KW-1185">Reference proteome</keyword>
<keyword id="KW-0732">Signal</keyword>
<keyword id="KW-0793">Thylakoid</keyword>
<protein>
    <recommendedName>
        <fullName evidence="1">Photosystem II assembly lipoprotein Ycf48</fullName>
    </recommendedName>
</protein>
<feature type="signal peptide" evidence="1">
    <location>
        <begin position="1"/>
        <end position="23"/>
    </location>
</feature>
<feature type="chain" id="PRO_1000143569" description="Photosystem II assembly lipoprotein Ycf48" evidence="1">
    <location>
        <begin position="24"/>
        <end position="331"/>
    </location>
</feature>
<feature type="lipid moiety-binding region" description="N-palmitoyl cysteine" evidence="1">
    <location>
        <position position="24"/>
    </location>
</feature>
<feature type="lipid moiety-binding region" description="S-diacylglycerol cysteine" evidence="1">
    <location>
        <position position="24"/>
    </location>
</feature>
<name>YCF48_SYNR3</name>
<gene>
    <name evidence="1" type="primary">ycf48</name>
    <name type="ordered locus">SynRCC307_0211</name>
</gene>
<comment type="function">
    <text evidence="1">A factor required for optimal assembly of photosystem II (PSII), acting in the early stages of PSII assembly. Also plays a role in replacement of photodamaged D1 (psbA). Assists YidC in synthesis of chlorophyll-binding proteins.</text>
</comment>
<comment type="subunit">
    <text evidence="1">Part of early PSII assembly complexes which includes D1 (psbA) and PsbI; not found in mature PSII. Binds to the lumenal side of PSII complexes. Interacts with YidC.</text>
</comment>
<comment type="subcellular location">
    <subcellularLocation>
        <location evidence="1">Cellular thylakoid membrane</location>
        <topology evidence="1">Lipid-anchor</topology>
        <orientation evidence="1">Lumenal side</orientation>
    </subcellularLocation>
    <text evidence="1">Associated with a PSII precusor complex on the lumenal side of the thylakoid membrane.</text>
</comment>
<comment type="domain">
    <text evidence="1">A 7-bladed beta-propeller torus, about 55 by 55 Angstroms, with a depth of about 25 Angstroms and a central pore.</text>
</comment>
<comment type="similarity">
    <text evidence="1">Belongs to the Ycf48 family.</text>
</comment>
<accession>A5GQF5</accession>
<organism>
    <name type="scientific">Synechococcus sp. (strain RCC307)</name>
    <dbReference type="NCBI Taxonomy" id="316278"/>
    <lineage>
        <taxon>Bacteria</taxon>
        <taxon>Bacillati</taxon>
        <taxon>Cyanobacteriota</taxon>
        <taxon>Cyanophyceae</taxon>
        <taxon>Synechococcales</taxon>
        <taxon>Synechococcaceae</taxon>
        <taxon>Synechococcus</taxon>
    </lineage>
</organism>
<reference key="1">
    <citation type="submission" date="2006-05" db="EMBL/GenBank/DDBJ databases">
        <authorList>
            <consortium name="Genoscope"/>
        </authorList>
    </citation>
    <scope>NUCLEOTIDE SEQUENCE [LARGE SCALE GENOMIC DNA]</scope>
    <source>
        <strain>RCC307</strain>
    </source>
</reference>
<evidence type="ECO:0000255" key="1">
    <source>
        <dbReference type="HAMAP-Rule" id="MF_01348"/>
    </source>
</evidence>
<dbReference type="EMBL" id="CT978603">
    <property type="protein sequence ID" value="CAK27114.1"/>
    <property type="molecule type" value="Genomic_DNA"/>
</dbReference>
<dbReference type="SMR" id="A5GQF5"/>
<dbReference type="STRING" id="316278.SynRCC307_0211"/>
<dbReference type="KEGG" id="syr:SynRCC307_0211"/>
<dbReference type="eggNOG" id="COG4447">
    <property type="taxonomic scope" value="Bacteria"/>
</dbReference>
<dbReference type="HOGENOM" id="CLU_057027_0_0_3"/>
<dbReference type="OrthoDB" id="9813892at2"/>
<dbReference type="Proteomes" id="UP000001115">
    <property type="component" value="Chromosome"/>
</dbReference>
<dbReference type="GO" id="GO:0009523">
    <property type="term" value="C:photosystem II"/>
    <property type="evidence" value="ECO:0007669"/>
    <property type="project" value="UniProtKB-KW"/>
</dbReference>
<dbReference type="GO" id="GO:0031676">
    <property type="term" value="C:plasma membrane-derived thylakoid membrane"/>
    <property type="evidence" value="ECO:0007669"/>
    <property type="project" value="UniProtKB-SubCell"/>
</dbReference>
<dbReference type="GO" id="GO:0031977">
    <property type="term" value="C:thylakoid lumen"/>
    <property type="evidence" value="ECO:0007669"/>
    <property type="project" value="UniProtKB-UniRule"/>
</dbReference>
<dbReference type="GO" id="GO:0015979">
    <property type="term" value="P:photosynthesis"/>
    <property type="evidence" value="ECO:0007669"/>
    <property type="project" value="UniProtKB-KW"/>
</dbReference>
<dbReference type="Gene3D" id="2.130.10.10">
    <property type="entry name" value="YVTN repeat-like/Quinoprotein amine dehydrogenase"/>
    <property type="match status" value="2"/>
</dbReference>
<dbReference type="HAMAP" id="MF_01348">
    <property type="entry name" value="Ycf48"/>
    <property type="match status" value="1"/>
</dbReference>
<dbReference type="InterPro" id="IPR028203">
    <property type="entry name" value="PSII_CF48-like_dom"/>
</dbReference>
<dbReference type="InterPro" id="IPR015943">
    <property type="entry name" value="WD40/YVTN_repeat-like_dom_sf"/>
</dbReference>
<dbReference type="InterPro" id="IPR016705">
    <property type="entry name" value="Ycf48/Hcf136"/>
</dbReference>
<dbReference type="NCBIfam" id="NF010237">
    <property type="entry name" value="PRK13684.1"/>
    <property type="match status" value="1"/>
</dbReference>
<dbReference type="PANTHER" id="PTHR47199">
    <property type="entry name" value="PHOTOSYSTEM II STABILITY/ASSEMBLY FACTOR HCF136, CHLOROPLASTIC"/>
    <property type="match status" value="1"/>
</dbReference>
<dbReference type="PANTHER" id="PTHR47199:SF2">
    <property type="entry name" value="PHOTOSYSTEM II STABILITY_ASSEMBLY FACTOR HCF136, CHLOROPLASTIC"/>
    <property type="match status" value="1"/>
</dbReference>
<dbReference type="Pfam" id="PF14870">
    <property type="entry name" value="PSII_BNR"/>
    <property type="match status" value="1"/>
</dbReference>
<dbReference type="PIRSF" id="PIRSF017875">
    <property type="entry name" value="PSII_HCF136"/>
    <property type="match status" value="1"/>
</dbReference>
<dbReference type="SUPFAM" id="SSF110296">
    <property type="entry name" value="Oligoxyloglucan reducing end-specific cellobiohydrolase"/>
    <property type="match status" value="1"/>
</dbReference>
<proteinExistence type="inferred from homology"/>
<sequence>MIPVIRSFLSLLLCVGLTFGLGGCVTTSLPMAAASPWNSQKLGIESNPLDVAFTNESHGFLVGSNRLVMETSDGGETWEEREIDLPADENFRLISIDFNGDEGWIAGQPGLLLHSDDAGQSWSRLLLDTKLPGDPYLITALGSKKAELATNVGAIYQSSDAGKSWQAEVVDAAGSVRDLRRGDDGRYVSVSSLGNFFSTWDPGQSNWQVHQRVSSQRLQSMGYQPDGQMWMVTRGAQLRFNPEGGDYEEWSKPVIPITNGYGYLDMAWDPQGNIWAGGGNGTLLVSSDGGKEWEKDPVGTATPSNFTRFVFLGGNKAFALGERGAILRWVG</sequence>